<name>TFE3_BOVIN</name>
<accession>Q05B92</accession>
<reference key="1">
    <citation type="submission" date="2006-08" db="EMBL/GenBank/DDBJ databases">
        <authorList>
            <consortium name="NIH - Mammalian Gene Collection (MGC) project"/>
        </authorList>
    </citation>
    <scope>NUCLEOTIDE SEQUENCE [LARGE SCALE MRNA]</scope>
    <source>
        <strain>Hereford</strain>
        <tissue>Hippocampus</tissue>
    </source>
</reference>
<sequence>MSHAAEPAQDGVEASAEGPRAVFLLLEDRRPADSAQLLSLNSLLPESGIVADIELENVLDPDSFYELKSPPLSLRSSLPISLQATPATPATLSASSSAEGSRTPAMSSSSSSRVLLRQQLMRAQAQEQERRERREQASSFPSPAPASPAISVVGVSAGGHTLGRPPPAQVPREVLKVQTHLENPTRYHLQQARRQQVKQYLSTTLGPKLASQALTPPPGGASVQPLPTPEAAHAPGPTSSAPNSPMALLTIGSSSEKEIDDVIDEIISLESSYNDEMLSYLPGGNTGLQLPSTLPVSGNLLDVYNNQGVATPAITVSNSCPAELPNIKREISETEAKALLKERQKKDNHNLIERRRRFNINDRIKELGTLIPKSSDPEMRWNKGTILKASVDYIRKLQKEQQRSKDLESRQRSLEQANRSLQLRIQELELQAQIHGLPVPPTPGLLSLAATSASDSLKPEQLDVEEEGRPGTAIFHATGGLAQSAPHQQPPPPPSDALLDLHFPSDHLGDLGDPFHLGLEDILMEEEEGVVGGLSGGTLSPLRAASDPLLSSVSPAVSKASSRRSSFSMEEES</sequence>
<evidence type="ECO:0000250" key="1">
    <source>
        <dbReference type="UniProtKB" id="P19532"/>
    </source>
</evidence>
<evidence type="ECO:0000250" key="2">
    <source>
        <dbReference type="UniProtKB" id="Q64092"/>
    </source>
</evidence>
<evidence type="ECO:0000255" key="3"/>
<evidence type="ECO:0000255" key="4">
    <source>
        <dbReference type="PROSITE-ProRule" id="PRU00981"/>
    </source>
</evidence>
<evidence type="ECO:0000256" key="5">
    <source>
        <dbReference type="SAM" id="MobiDB-lite"/>
    </source>
</evidence>
<evidence type="ECO:0000305" key="6"/>
<feature type="chain" id="PRO_0000270142" description="Transcription factor E3">
    <location>
        <begin position="1"/>
        <end position="573"/>
    </location>
</feature>
<feature type="domain" description="bHLH" evidence="4">
    <location>
        <begin position="344"/>
        <end position="397"/>
    </location>
</feature>
<feature type="region of interest" description="Disordered" evidence="5">
    <location>
        <begin position="91"/>
        <end position="151"/>
    </location>
</feature>
<feature type="region of interest" description="Disordered" evidence="5">
    <location>
        <begin position="209"/>
        <end position="248"/>
    </location>
</feature>
<feature type="region of interest" description="Strong transcription activation domain" evidence="3">
    <location>
        <begin position="258"/>
        <end position="269"/>
    </location>
</feature>
<feature type="region of interest" description="Leucine-zipper">
    <location>
        <begin position="407"/>
        <end position="428"/>
    </location>
</feature>
<feature type="region of interest" description="Disordered" evidence="5">
    <location>
        <begin position="531"/>
        <end position="573"/>
    </location>
</feature>
<feature type="short sequence motif" description="Nuclear localization signal" evidence="1">
    <location>
        <begin position="354"/>
        <end position="357"/>
    </location>
</feature>
<feature type="compositionally biased region" description="Low complexity" evidence="5">
    <location>
        <begin position="107"/>
        <end position="126"/>
    </location>
</feature>
<feature type="compositionally biased region" description="Basic and acidic residues" evidence="5">
    <location>
        <begin position="127"/>
        <end position="136"/>
    </location>
</feature>
<feature type="compositionally biased region" description="Low complexity" evidence="5">
    <location>
        <begin position="137"/>
        <end position="151"/>
    </location>
</feature>
<feature type="compositionally biased region" description="Low complexity" evidence="5">
    <location>
        <begin position="537"/>
        <end position="573"/>
    </location>
</feature>
<feature type="modified residue" description="Phosphoserine; by MTOR" evidence="1">
    <location>
        <position position="47"/>
    </location>
</feature>
<feature type="modified residue" description="Asymmetric dimethylarginine" evidence="2">
    <location>
        <position position="186"/>
    </location>
</feature>
<feature type="modified residue" description="Phosphoserine; by MTOR" evidence="2">
    <location>
        <position position="319"/>
    </location>
</feature>
<feature type="modified residue" description="Phosphoserine" evidence="1">
    <location>
        <position position="540"/>
    </location>
</feature>
<feature type="modified residue" description="Phosphoserine" evidence="1">
    <location>
        <position position="546"/>
    </location>
</feature>
<feature type="modified residue" description="Phosphoserine" evidence="2">
    <location>
        <position position="552"/>
    </location>
</feature>
<feature type="modified residue" description="Phosphoserine" evidence="1">
    <location>
        <position position="554"/>
    </location>
</feature>
<feature type="modified residue" description="Phosphoserine" evidence="1">
    <location>
        <position position="558"/>
    </location>
</feature>
<feature type="modified residue" description="Phosphoserine" evidence="1">
    <location>
        <position position="566"/>
    </location>
</feature>
<feature type="cross-link" description="Glycyl lysine isopeptide (Lys-Gly) (interchain with G-Cter in SUMO2)" evidence="1">
    <location>
        <position position="337"/>
    </location>
</feature>
<gene>
    <name evidence="1" type="primary">TFE3</name>
</gene>
<proteinExistence type="evidence at transcript level"/>
<dbReference type="EMBL" id="BC122581">
    <property type="protein sequence ID" value="AAI22582.1"/>
    <property type="molecule type" value="mRNA"/>
</dbReference>
<dbReference type="RefSeq" id="NP_001069279.2">
    <property type="nucleotide sequence ID" value="NM_001075811.2"/>
</dbReference>
<dbReference type="SMR" id="Q05B92"/>
<dbReference type="FunCoup" id="Q05B92">
    <property type="interactions" value="3470"/>
</dbReference>
<dbReference type="STRING" id="9913.ENSBTAP00000011237"/>
<dbReference type="PaxDb" id="9913-ENSBTAP00000011237"/>
<dbReference type="GeneID" id="520800"/>
<dbReference type="KEGG" id="bta:520800"/>
<dbReference type="CTD" id="7030"/>
<dbReference type="VEuPathDB" id="HostDB:ENSBTAG00000008523"/>
<dbReference type="eggNOG" id="KOG1318">
    <property type="taxonomic scope" value="Eukaryota"/>
</dbReference>
<dbReference type="HOGENOM" id="CLU_031638_1_1_1"/>
<dbReference type="InParanoid" id="Q05B92"/>
<dbReference type="OMA" id="ATFHAGE"/>
<dbReference type="OrthoDB" id="6242697at2759"/>
<dbReference type="TreeFam" id="TF317174"/>
<dbReference type="Proteomes" id="UP000009136">
    <property type="component" value="Chromosome X"/>
</dbReference>
<dbReference type="Bgee" id="ENSBTAG00000008523">
    <property type="expression patterns" value="Expressed in monocyte and 104 other cell types or tissues"/>
</dbReference>
<dbReference type="GO" id="GO:0005737">
    <property type="term" value="C:cytoplasm"/>
    <property type="evidence" value="ECO:0000250"/>
    <property type="project" value="UniProtKB"/>
</dbReference>
<dbReference type="GO" id="GO:0005829">
    <property type="term" value="C:cytosol"/>
    <property type="evidence" value="ECO:0000250"/>
    <property type="project" value="UniProtKB"/>
</dbReference>
<dbReference type="GO" id="GO:0005765">
    <property type="term" value="C:lysosomal membrane"/>
    <property type="evidence" value="ECO:0000250"/>
    <property type="project" value="UniProtKB"/>
</dbReference>
<dbReference type="GO" id="GO:0005634">
    <property type="term" value="C:nucleus"/>
    <property type="evidence" value="ECO:0000250"/>
    <property type="project" value="UniProtKB"/>
</dbReference>
<dbReference type="GO" id="GO:0003700">
    <property type="term" value="F:DNA-binding transcription factor activity"/>
    <property type="evidence" value="ECO:0000250"/>
    <property type="project" value="UniProtKB"/>
</dbReference>
<dbReference type="GO" id="GO:0000981">
    <property type="term" value="F:DNA-binding transcription factor activity, RNA polymerase II-specific"/>
    <property type="evidence" value="ECO:0000250"/>
    <property type="project" value="UniProtKB"/>
</dbReference>
<dbReference type="GO" id="GO:0046983">
    <property type="term" value="F:protein dimerization activity"/>
    <property type="evidence" value="ECO:0007669"/>
    <property type="project" value="InterPro"/>
</dbReference>
<dbReference type="GO" id="GO:0000978">
    <property type="term" value="F:RNA polymerase II cis-regulatory region sequence-specific DNA binding"/>
    <property type="evidence" value="ECO:0000318"/>
    <property type="project" value="GO_Central"/>
</dbReference>
<dbReference type="GO" id="GO:0000976">
    <property type="term" value="F:transcription cis-regulatory region binding"/>
    <property type="evidence" value="ECO:0000250"/>
    <property type="project" value="UniProtKB"/>
</dbReference>
<dbReference type="GO" id="GO:0002250">
    <property type="term" value="P:adaptive immune response"/>
    <property type="evidence" value="ECO:0007669"/>
    <property type="project" value="UniProtKB-KW"/>
</dbReference>
<dbReference type="GO" id="GO:0006959">
    <property type="term" value="P:humoral immune response"/>
    <property type="evidence" value="ECO:0000250"/>
    <property type="project" value="UniProtKB"/>
</dbReference>
<dbReference type="GO" id="GO:0007040">
    <property type="term" value="P:lysosome organization"/>
    <property type="evidence" value="ECO:0000250"/>
    <property type="project" value="UniProtKB"/>
</dbReference>
<dbReference type="GO" id="GO:0090336">
    <property type="term" value="P:positive regulation of brown fat cell differentiation"/>
    <property type="evidence" value="ECO:0000250"/>
    <property type="project" value="UniProtKB"/>
</dbReference>
<dbReference type="GO" id="GO:0045785">
    <property type="term" value="P:positive regulation of cell adhesion"/>
    <property type="evidence" value="ECO:0000250"/>
    <property type="project" value="UniProtKB"/>
</dbReference>
<dbReference type="GO" id="GO:0045893">
    <property type="term" value="P:positive regulation of DNA-templated transcription"/>
    <property type="evidence" value="ECO:0000250"/>
    <property type="project" value="UniProtKB"/>
</dbReference>
<dbReference type="GO" id="GO:0045944">
    <property type="term" value="P:positive regulation of transcription by RNA polymerase II"/>
    <property type="evidence" value="ECO:0000250"/>
    <property type="project" value="UniProtKB"/>
</dbReference>
<dbReference type="GO" id="GO:0045670">
    <property type="term" value="P:regulation of osteoclast differentiation"/>
    <property type="evidence" value="ECO:0007669"/>
    <property type="project" value="InterPro"/>
</dbReference>
<dbReference type="GO" id="GO:0006357">
    <property type="term" value="P:regulation of transcription by RNA polymerase II"/>
    <property type="evidence" value="ECO:0000318"/>
    <property type="project" value="GO_Central"/>
</dbReference>
<dbReference type="CDD" id="cd18928">
    <property type="entry name" value="bHLHzip_TFE3"/>
    <property type="match status" value="1"/>
</dbReference>
<dbReference type="FunFam" id="4.10.280.10:FF:000003">
    <property type="entry name" value="microphthalmia-associated transcription factor isoform X1"/>
    <property type="match status" value="1"/>
</dbReference>
<dbReference type="Gene3D" id="4.10.280.10">
    <property type="entry name" value="Helix-loop-helix DNA-binding domain"/>
    <property type="match status" value="1"/>
</dbReference>
<dbReference type="InterPro" id="IPR011598">
    <property type="entry name" value="bHLH_dom"/>
</dbReference>
<dbReference type="InterPro" id="IPR024100">
    <property type="entry name" value="bHLHzip_TFE3"/>
</dbReference>
<dbReference type="InterPro" id="IPR036638">
    <property type="entry name" value="HLH_DNA-bd_sf"/>
</dbReference>
<dbReference type="InterPro" id="IPR021802">
    <property type="entry name" value="MiT/TFE_C"/>
</dbReference>
<dbReference type="InterPro" id="IPR031867">
    <property type="entry name" value="MiT/TFE_N"/>
</dbReference>
<dbReference type="PANTHER" id="PTHR45776">
    <property type="entry name" value="MIP04163P"/>
    <property type="match status" value="1"/>
</dbReference>
<dbReference type="PANTHER" id="PTHR45776:SF3">
    <property type="entry name" value="TRANSCRIPTION FACTOR E3"/>
    <property type="match status" value="1"/>
</dbReference>
<dbReference type="Pfam" id="PF11851">
    <property type="entry name" value="DUF3371"/>
    <property type="match status" value="1"/>
</dbReference>
<dbReference type="Pfam" id="PF00010">
    <property type="entry name" value="HLH"/>
    <property type="match status" value="1"/>
</dbReference>
<dbReference type="Pfam" id="PF15951">
    <property type="entry name" value="MITF_TFEB_C_3_N"/>
    <property type="match status" value="1"/>
</dbReference>
<dbReference type="SMART" id="SM00353">
    <property type="entry name" value="HLH"/>
    <property type="match status" value="1"/>
</dbReference>
<dbReference type="SUPFAM" id="SSF47459">
    <property type="entry name" value="HLH, helix-loop-helix DNA-binding domain"/>
    <property type="match status" value="1"/>
</dbReference>
<dbReference type="PROSITE" id="PS50888">
    <property type="entry name" value="BHLH"/>
    <property type="match status" value="1"/>
</dbReference>
<organism>
    <name type="scientific">Bos taurus</name>
    <name type="common">Bovine</name>
    <dbReference type="NCBI Taxonomy" id="9913"/>
    <lineage>
        <taxon>Eukaryota</taxon>
        <taxon>Metazoa</taxon>
        <taxon>Chordata</taxon>
        <taxon>Craniata</taxon>
        <taxon>Vertebrata</taxon>
        <taxon>Euteleostomi</taxon>
        <taxon>Mammalia</taxon>
        <taxon>Eutheria</taxon>
        <taxon>Laurasiatheria</taxon>
        <taxon>Artiodactyla</taxon>
        <taxon>Ruminantia</taxon>
        <taxon>Pecora</taxon>
        <taxon>Bovidae</taxon>
        <taxon>Bovinae</taxon>
        <taxon>Bos</taxon>
    </lineage>
</organism>
<keyword id="KW-0010">Activator</keyword>
<keyword id="KW-1064">Adaptive immunity</keyword>
<keyword id="KW-0963">Cytoplasm</keyword>
<keyword id="KW-0238">DNA-binding</keyword>
<keyword id="KW-0391">Immunity</keyword>
<keyword id="KW-1017">Isopeptide bond</keyword>
<keyword id="KW-0458">Lysosome</keyword>
<keyword id="KW-0472">Membrane</keyword>
<keyword id="KW-0488">Methylation</keyword>
<keyword id="KW-0539">Nucleus</keyword>
<keyword id="KW-0597">Phosphoprotein</keyword>
<keyword id="KW-1185">Reference proteome</keyword>
<keyword id="KW-0804">Transcription</keyword>
<keyword id="KW-0805">Transcription regulation</keyword>
<keyword id="KW-0832">Ubl conjugation</keyword>
<protein>
    <recommendedName>
        <fullName evidence="1">Transcription factor E3</fullName>
    </recommendedName>
</protein>
<comment type="function">
    <text evidence="1 2">Transcription factor that acts as a master regulator of lysosomal biogenesis and immune response. Specifically recognizes and binds E-box sequences (5'-CANNTG-3'); efficient DNA-binding requires dimerization with itself or with another MiT/TFE family member such as TFEB or MITF. Involved in the cellular response to amino acid availability by acting downstream of MTOR: in the presence of nutrients, TFE3 phosphorylation by MTOR promotes its inactivation. Upon starvation or lysosomal stress, inhibition of MTOR induces TFE3 dephosphorylation, resulting in transcription factor activity. Specifically recognizes and binds the CLEAR-box sequence (5'-GTCACGTGAC-3') present in the regulatory region of many lysosomal genes, leading to activate their expression, thereby playing a central role in expression of lysosomal genes (By similarity). Maintains the pluripotent state of embryonic stem cells by promoting the expression of genes such as ESRRB; mTOR-dependent TFE3 cytosolic retention and inactivation promotes exit from pluripotency (By similarity). Required to maintain the naive pluripotent state of hematopoietic stem cell; mTOR-dependent cytoplasmic retention of TFE3 promotes the exit of hematopoietic stem cell from pluripotency (By similarity). TFE3 activity is also involved in the inhibition of neuronal progenitor differentiation. Acts as a positive regulator of browning of adipose tissue by promoting expression of target genes; mTOR-dependent phosphorylation promotes cytoplasmic retention of TFE3 and inhibits browning of adipose tissue. In association with TFEB, activates the expression of CD40L in T-cells, thereby playing a role in T-cell-dependent antibody responses in activated CD4(+) T-cells and thymus-dependent humoral immunity (By similarity). Specifically recognizes the MUE3 box, a subset of E-boxes, present in the immunoglobulin enhancer. It also binds very well to a USF/MLTF site. May regulate lysosomal positioning in response to nutrient deprivation by promoting the expression of PIP4P1 (By similarity).</text>
</comment>
<comment type="subunit">
    <text evidence="1">Homodimer and heterodimer; with TFEB or MITF. Interacts with RRAGC/RagC GDP-bound and RRAGD/RagD GDP-bound; promoting its recruitment to lysosomal membrane in the presence of nutrients.</text>
</comment>
<comment type="subcellular location">
    <subcellularLocation>
        <location evidence="1">Cytoplasm</location>
        <location evidence="1">Cytosol</location>
    </subcellularLocation>
    <subcellularLocation>
        <location evidence="1">Nucleus</location>
    </subcellularLocation>
    <subcellularLocation>
        <location evidence="1">Lysosome membrane</location>
    </subcellularLocation>
    <text evidence="1">When nutrients are present, recruited to the lysosomal membrane via association with GDP-bound RagC/RRAGC (or RagD/RRAGD): it is then phosphorylated by MTOR. Phosphorylation by MTOR prevents nuclear translocation and promotes ubiquitination and degradation. Conversely, inhibition of mTORC1, starvation and lysosomal disruption, promotes dephosphorylation and translocation to the nucleus.</text>
</comment>
<comment type="PTM">
    <text evidence="1">Phosphorylation ar Ser-47 and Ser-319 by MTOR via non-canonical mTORC1 pathway regulates its stability and subcellular location, respectively. When nutrients are present, phosphorylation by MTOR at Ser-47 promotes ubiquitination by the SCF(BTRC) complex, followed by degradation. When nutrients are present, phosphorylation by MTOR at Ser-319 also promotes association with 14-3-3/YWHA adapters and retention in the cytosol. Phosphorylation at Ser-47 plays a more critical role than phosphorylation at Ser-319 for TFE3 inactivation. Inhibition of mTORC1, starvation and lysosomal disruption, promotes dephosphorylation and transcription factor activity.</text>
</comment>
<comment type="PTM">
    <text evidence="1">Ubiquitinated by the SCF(BTRC) and SCF(FBXW11) complexes following phosphorylation at Ser-47 by MTOR, leading to its degradation by the proteasome.</text>
</comment>
<comment type="PTM">
    <text evidence="1">Sumoylated; does not affect dimerization with MITF.</text>
</comment>
<comment type="similarity">
    <text evidence="6">Belongs to the MiT/TFE family.</text>
</comment>